<proteinExistence type="inferred from homology"/>
<keyword id="KW-0488">Methylation</keyword>
<keyword id="KW-0687">Ribonucleoprotein</keyword>
<keyword id="KW-0689">Ribosomal protein</keyword>
<keyword id="KW-0694">RNA-binding</keyword>
<keyword id="KW-0699">rRNA-binding</keyword>
<accession>B0BWA5</accession>
<protein>
    <recommendedName>
        <fullName evidence="1">Large ribosomal subunit protein uL11</fullName>
    </recommendedName>
    <alternativeName>
        <fullName evidence="2">50S ribosomal protein L11</fullName>
    </alternativeName>
</protein>
<evidence type="ECO:0000255" key="1">
    <source>
        <dbReference type="HAMAP-Rule" id="MF_00736"/>
    </source>
</evidence>
<evidence type="ECO:0000305" key="2"/>
<dbReference type="EMBL" id="CP000766">
    <property type="protein sequence ID" value="ABY72131.1"/>
    <property type="molecule type" value="Genomic_DNA"/>
</dbReference>
<dbReference type="RefSeq" id="WP_004996639.1">
    <property type="nucleotide sequence ID" value="NC_010263.3"/>
</dbReference>
<dbReference type="SMR" id="B0BWA5"/>
<dbReference type="GeneID" id="95361892"/>
<dbReference type="KEGG" id="rrj:RrIowa_0219"/>
<dbReference type="eggNOG" id="COG0080">
    <property type="taxonomic scope" value="Bacteria"/>
</dbReference>
<dbReference type="HOGENOM" id="CLU_074237_2_0_5"/>
<dbReference type="Proteomes" id="UP000000796">
    <property type="component" value="Chromosome"/>
</dbReference>
<dbReference type="GO" id="GO:0022625">
    <property type="term" value="C:cytosolic large ribosomal subunit"/>
    <property type="evidence" value="ECO:0007669"/>
    <property type="project" value="TreeGrafter"/>
</dbReference>
<dbReference type="GO" id="GO:0070180">
    <property type="term" value="F:large ribosomal subunit rRNA binding"/>
    <property type="evidence" value="ECO:0007669"/>
    <property type="project" value="UniProtKB-UniRule"/>
</dbReference>
<dbReference type="GO" id="GO:0003735">
    <property type="term" value="F:structural constituent of ribosome"/>
    <property type="evidence" value="ECO:0007669"/>
    <property type="project" value="InterPro"/>
</dbReference>
<dbReference type="GO" id="GO:0006412">
    <property type="term" value="P:translation"/>
    <property type="evidence" value="ECO:0007669"/>
    <property type="project" value="UniProtKB-UniRule"/>
</dbReference>
<dbReference type="CDD" id="cd00349">
    <property type="entry name" value="Ribosomal_L11"/>
    <property type="match status" value="1"/>
</dbReference>
<dbReference type="FunFam" id="3.30.1550.10:FF:000005">
    <property type="entry name" value="50S ribosomal protein L11"/>
    <property type="match status" value="1"/>
</dbReference>
<dbReference type="Gene3D" id="1.10.10.250">
    <property type="entry name" value="Ribosomal protein L11, C-terminal domain"/>
    <property type="match status" value="1"/>
</dbReference>
<dbReference type="Gene3D" id="3.30.1550.10">
    <property type="entry name" value="Ribosomal protein L11/L12, N-terminal domain"/>
    <property type="match status" value="1"/>
</dbReference>
<dbReference type="HAMAP" id="MF_00736">
    <property type="entry name" value="Ribosomal_uL11"/>
    <property type="match status" value="1"/>
</dbReference>
<dbReference type="InterPro" id="IPR000911">
    <property type="entry name" value="Ribosomal_uL11"/>
</dbReference>
<dbReference type="InterPro" id="IPR006519">
    <property type="entry name" value="Ribosomal_uL11_bac-typ"/>
</dbReference>
<dbReference type="InterPro" id="IPR020783">
    <property type="entry name" value="Ribosomal_uL11_C"/>
</dbReference>
<dbReference type="InterPro" id="IPR036769">
    <property type="entry name" value="Ribosomal_uL11_C_sf"/>
</dbReference>
<dbReference type="InterPro" id="IPR020785">
    <property type="entry name" value="Ribosomal_uL11_CS"/>
</dbReference>
<dbReference type="InterPro" id="IPR020784">
    <property type="entry name" value="Ribosomal_uL11_N"/>
</dbReference>
<dbReference type="InterPro" id="IPR036796">
    <property type="entry name" value="Ribosomal_uL11_N_sf"/>
</dbReference>
<dbReference type="NCBIfam" id="TIGR01632">
    <property type="entry name" value="L11_bact"/>
    <property type="match status" value="1"/>
</dbReference>
<dbReference type="PANTHER" id="PTHR11661">
    <property type="entry name" value="60S RIBOSOMAL PROTEIN L12"/>
    <property type="match status" value="1"/>
</dbReference>
<dbReference type="PANTHER" id="PTHR11661:SF1">
    <property type="entry name" value="LARGE RIBOSOMAL SUBUNIT PROTEIN UL11M"/>
    <property type="match status" value="1"/>
</dbReference>
<dbReference type="Pfam" id="PF00298">
    <property type="entry name" value="Ribosomal_L11"/>
    <property type="match status" value="1"/>
</dbReference>
<dbReference type="Pfam" id="PF03946">
    <property type="entry name" value="Ribosomal_L11_N"/>
    <property type="match status" value="1"/>
</dbReference>
<dbReference type="SMART" id="SM00649">
    <property type="entry name" value="RL11"/>
    <property type="match status" value="1"/>
</dbReference>
<dbReference type="SUPFAM" id="SSF54747">
    <property type="entry name" value="Ribosomal L11/L12e N-terminal domain"/>
    <property type="match status" value="1"/>
</dbReference>
<dbReference type="SUPFAM" id="SSF46906">
    <property type="entry name" value="Ribosomal protein L11, C-terminal domain"/>
    <property type="match status" value="1"/>
</dbReference>
<dbReference type="PROSITE" id="PS00359">
    <property type="entry name" value="RIBOSOMAL_L11"/>
    <property type="match status" value="1"/>
</dbReference>
<sequence>MSQKAIKGYINLIIPAAGATPAPPIGPALGQRKVNIAAFCKDFNDATQGMEKGIPLPTVITVYEDSSFSFKIKTPPASYFLKKYAKITKGSSATKKEAVVGKVTMDDCREIAKLKMPDLNTKNIEAATKIICGSAASMGLEVVGN</sequence>
<comment type="function">
    <text evidence="1">Forms part of the ribosomal stalk which helps the ribosome interact with GTP-bound translation factors.</text>
</comment>
<comment type="subunit">
    <text evidence="1">Part of the ribosomal stalk of the 50S ribosomal subunit. Interacts with L10 and the large rRNA to form the base of the stalk. L10 forms an elongated spine to which L12 dimers bind in a sequential fashion forming a multimeric L10(L12)X complex.</text>
</comment>
<comment type="PTM">
    <text evidence="1">One or more lysine residues are methylated.</text>
</comment>
<comment type="similarity">
    <text evidence="1">Belongs to the universal ribosomal protein uL11 family.</text>
</comment>
<organism>
    <name type="scientific">Rickettsia rickettsii (strain Iowa)</name>
    <dbReference type="NCBI Taxonomy" id="452659"/>
    <lineage>
        <taxon>Bacteria</taxon>
        <taxon>Pseudomonadati</taxon>
        <taxon>Pseudomonadota</taxon>
        <taxon>Alphaproteobacteria</taxon>
        <taxon>Rickettsiales</taxon>
        <taxon>Rickettsiaceae</taxon>
        <taxon>Rickettsieae</taxon>
        <taxon>Rickettsia</taxon>
        <taxon>spotted fever group</taxon>
    </lineage>
</organism>
<gene>
    <name evidence="1" type="primary">rplK</name>
    <name type="ordered locus">RrIowa_0219</name>
</gene>
<name>RL11_RICRO</name>
<feature type="chain" id="PRO_1000083398" description="Large ribosomal subunit protein uL11">
    <location>
        <begin position="1"/>
        <end position="145"/>
    </location>
</feature>
<reference key="1">
    <citation type="journal article" date="2008" name="Infect. Immun.">
        <title>Genomic comparison of virulent Rickettsia rickettsii Sheila Smith and avirulent Rickettsia rickettsii Iowa.</title>
        <authorList>
            <person name="Ellison D.W."/>
            <person name="Clark T.R."/>
            <person name="Sturdevant D.E."/>
            <person name="Virtaneva K."/>
            <person name="Porcella S.F."/>
            <person name="Hackstadt T."/>
        </authorList>
    </citation>
    <scope>NUCLEOTIDE SEQUENCE [LARGE SCALE GENOMIC DNA]</scope>
    <source>
        <strain>Iowa</strain>
    </source>
</reference>